<gene>
    <name evidence="1" type="primary">dapA</name>
    <name type="ordered locus">Sfri_1864</name>
</gene>
<evidence type="ECO:0000255" key="1">
    <source>
        <dbReference type="HAMAP-Rule" id="MF_00418"/>
    </source>
</evidence>
<evidence type="ECO:0000305" key="2"/>
<protein>
    <recommendedName>
        <fullName evidence="1">4-hydroxy-tetrahydrodipicolinate synthase</fullName>
        <shortName evidence="1">HTPA synthase</shortName>
        <ecNumber evidence="1">4.3.3.7</ecNumber>
    </recommendedName>
</protein>
<feature type="chain" id="PRO_1000050265" description="4-hydroxy-tetrahydrodipicolinate synthase">
    <location>
        <begin position="1"/>
        <end position="294"/>
    </location>
</feature>
<feature type="active site" description="Proton donor/acceptor" evidence="1">
    <location>
        <position position="133"/>
    </location>
</feature>
<feature type="active site" description="Schiff-base intermediate with substrate" evidence="1">
    <location>
        <position position="161"/>
    </location>
</feature>
<feature type="binding site" evidence="1">
    <location>
        <position position="45"/>
    </location>
    <ligand>
        <name>pyruvate</name>
        <dbReference type="ChEBI" id="CHEBI:15361"/>
    </ligand>
</feature>
<feature type="binding site" evidence="1">
    <location>
        <position position="203"/>
    </location>
    <ligand>
        <name>pyruvate</name>
        <dbReference type="ChEBI" id="CHEBI:15361"/>
    </ligand>
</feature>
<feature type="site" description="Part of a proton relay during catalysis" evidence="1">
    <location>
        <position position="44"/>
    </location>
</feature>
<feature type="site" description="Part of a proton relay during catalysis" evidence="1">
    <location>
        <position position="107"/>
    </location>
</feature>
<sequence length="294" mass="31252">MINGSIVALITPMNSDGTVDYASLERLVEFHIEQGTDAIVAVGTTGESATLPMTEHAAVVCQTVKFASGRIPVIGGNGANATAEAIELTKSMQKSGVVAMLGVTPYYNKPTPKGLIAHYTAVAASTDIPQILYNVPGRTAVDMKPETVAELSSVSNIIGVKEATGDLSRVARLRELCGEDFLLYSGDDATAREFLLLGGNGVISVANNIVPHAFKAMCDAALAKNAQLAETIDQPLTGIYRSLFCEANPIPVKWAVHRMGLIANGHIRLPLTELSEQFHGLLIETMKQAHIEVK</sequence>
<name>DAPA_SHEFN</name>
<organism>
    <name type="scientific">Shewanella frigidimarina (strain NCIMB 400)</name>
    <dbReference type="NCBI Taxonomy" id="318167"/>
    <lineage>
        <taxon>Bacteria</taxon>
        <taxon>Pseudomonadati</taxon>
        <taxon>Pseudomonadota</taxon>
        <taxon>Gammaproteobacteria</taxon>
        <taxon>Alteromonadales</taxon>
        <taxon>Shewanellaceae</taxon>
        <taxon>Shewanella</taxon>
    </lineage>
</organism>
<accession>Q082V3</accession>
<dbReference type="EC" id="4.3.3.7" evidence="1"/>
<dbReference type="EMBL" id="CP000447">
    <property type="protein sequence ID" value="ABI71712.1"/>
    <property type="molecule type" value="Genomic_DNA"/>
</dbReference>
<dbReference type="RefSeq" id="WP_011637328.1">
    <property type="nucleotide sequence ID" value="NC_008345.1"/>
</dbReference>
<dbReference type="SMR" id="Q082V3"/>
<dbReference type="STRING" id="318167.Sfri_1864"/>
<dbReference type="KEGG" id="sfr:Sfri_1864"/>
<dbReference type="eggNOG" id="COG0329">
    <property type="taxonomic scope" value="Bacteria"/>
</dbReference>
<dbReference type="HOGENOM" id="CLU_049343_7_1_6"/>
<dbReference type="OrthoDB" id="9782828at2"/>
<dbReference type="UniPathway" id="UPA00034">
    <property type="reaction ID" value="UER00017"/>
</dbReference>
<dbReference type="Proteomes" id="UP000000684">
    <property type="component" value="Chromosome"/>
</dbReference>
<dbReference type="GO" id="GO:0005829">
    <property type="term" value="C:cytosol"/>
    <property type="evidence" value="ECO:0007669"/>
    <property type="project" value="TreeGrafter"/>
</dbReference>
<dbReference type="GO" id="GO:0008840">
    <property type="term" value="F:4-hydroxy-tetrahydrodipicolinate synthase activity"/>
    <property type="evidence" value="ECO:0007669"/>
    <property type="project" value="UniProtKB-UniRule"/>
</dbReference>
<dbReference type="GO" id="GO:0019877">
    <property type="term" value="P:diaminopimelate biosynthetic process"/>
    <property type="evidence" value="ECO:0007669"/>
    <property type="project" value="UniProtKB-UniRule"/>
</dbReference>
<dbReference type="GO" id="GO:0009089">
    <property type="term" value="P:lysine biosynthetic process via diaminopimelate"/>
    <property type="evidence" value="ECO:0007669"/>
    <property type="project" value="UniProtKB-UniRule"/>
</dbReference>
<dbReference type="CDD" id="cd00950">
    <property type="entry name" value="DHDPS"/>
    <property type="match status" value="1"/>
</dbReference>
<dbReference type="Gene3D" id="3.20.20.70">
    <property type="entry name" value="Aldolase class I"/>
    <property type="match status" value="1"/>
</dbReference>
<dbReference type="HAMAP" id="MF_00418">
    <property type="entry name" value="DapA"/>
    <property type="match status" value="1"/>
</dbReference>
<dbReference type="InterPro" id="IPR013785">
    <property type="entry name" value="Aldolase_TIM"/>
</dbReference>
<dbReference type="InterPro" id="IPR005263">
    <property type="entry name" value="DapA"/>
</dbReference>
<dbReference type="InterPro" id="IPR002220">
    <property type="entry name" value="DapA-like"/>
</dbReference>
<dbReference type="InterPro" id="IPR020625">
    <property type="entry name" value="Schiff_base-form_aldolases_AS"/>
</dbReference>
<dbReference type="InterPro" id="IPR020624">
    <property type="entry name" value="Schiff_base-form_aldolases_CS"/>
</dbReference>
<dbReference type="NCBIfam" id="TIGR00674">
    <property type="entry name" value="dapA"/>
    <property type="match status" value="1"/>
</dbReference>
<dbReference type="PANTHER" id="PTHR12128:SF66">
    <property type="entry name" value="4-HYDROXY-2-OXOGLUTARATE ALDOLASE, MITOCHONDRIAL"/>
    <property type="match status" value="1"/>
</dbReference>
<dbReference type="PANTHER" id="PTHR12128">
    <property type="entry name" value="DIHYDRODIPICOLINATE SYNTHASE"/>
    <property type="match status" value="1"/>
</dbReference>
<dbReference type="Pfam" id="PF00701">
    <property type="entry name" value="DHDPS"/>
    <property type="match status" value="1"/>
</dbReference>
<dbReference type="PIRSF" id="PIRSF001365">
    <property type="entry name" value="DHDPS"/>
    <property type="match status" value="1"/>
</dbReference>
<dbReference type="PRINTS" id="PR00146">
    <property type="entry name" value="DHPICSNTHASE"/>
</dbReference>
<dbReference type="SMART" id="SM01130">
    <property type="entry name" value="DHDPS"/>
    <property type="match status" value="1"/>
</dbReference>
<dbReference type="SUPFAM" id="SSF51569">
    <property type="entry name" value="Aldolase"/>
    <property type="match status" value="1"/>
</dbReference>
<dbReference type="PROSITE" id="PS00665">
    <property type="entry name" value="DHDPS_1"/>
    <property type="match status" value="1"/>
</dbReference>
<dbReference type="PROSITE" id="PS00666">
    <property type="entry name" value="DHDPS_2"/>
    <property type="match status" value="1"/>
</dbReference>
<comment type="function">
    <text evidence="1">Catalyzes the condensation of (S)-aspartate-beta-semialdehyde [(S)-ASA] and pyruvate to 4-hydroxy-tetrahydrodipicolinate (HTPA).</text>
</comment>
<comment type="catalytic activity">
    <reaction evidence="1">
        <text>L-aspartate 4-semialdehyde + pyruvate = (2S,4S)-4-hydroxy-2,3,4,5-tetrahydrodipicolinate + H2O + H(+)</text>
        <dbReference type="Rhea" id="RHEA:34171"/>
        <dbReference type="ChEBI" id="CHEBI:15361"/>
        <dbReference type="ChEBI" id="CHEBI:15377"/>
        <dbReference type="ChEBI" id="CHEBI:15378"/>
        <dbReference type="ChEBI" id="CHEBI:67139"/>
        <dbReference type="ChEBI" id="CHEBI:537519"/>
        <dbReference type="EC" id="4.3.3.7"/>
    </reaction>
</comment>
<comment type="pathway">
    <text evidence="1">Amino-acid biosynthesis; L-lysine biosynthesis via DAP pathway; (S)-tetrahydrodipicolinate from L-aspartate: step 3/4.</text>
</comment>
<comment type="subunit">
    <text evidence="1">Homotetramer; dimer of dimers.</text>
</comment>
<comment type="subcellular location">
    <subcellularLocation>
        <location evidence="1">Cytoplasm</location>
    </subcellularLocation>
</comment>
<comment type="similarity">
    <text evidence="1">Belongs to the DapA family.</text>
</comment>
<comment type="caution">
    <text evidence="2">Was originally thought to be a dihydrodipicolinate synthase (DHDPS), catalyzing the condensation of (S)-aspartate-beta-semialdehyde [(S)-ASA] and pyruvate to dihydrodipicolinate (DHDP). However, it was shown in E.coli that the product of the enzymatic reaction is not dihydrodipicolinate but in fact (4S)-4-hydroxy-2,3,4,5-tetrahydro-(2S)-dipicolinic acid (HTPA), and that the consecutive dehydration reaction leading to DHDP is not spontaneous but catalyzed by DapB.</text>
</comment>
<reference key="1">
    <citation type="submission" date="2006-08" db="EMBL/GenBank/DDBJ databases">
        <title>Complete sequence of Shewanella frigidimarina NCIMB 400.</title>
        <authorList>
            <consortium name="US DOE Joint Genome Institute"/>
            <person name="Copeland A."/>
            <person name="Lucas S."/>
            <person name="Lapidus A."/>
            <person name="Barry K."/>
            <person name="Detter J.C."/>
            <person name="Glavina del Rio T."/>
            <person name="Hammon N."/>
            <person name="Israni S."/>
            <person name="Dalin E."/>
            <person name="Tice H."/>
            <person name="Pitluck S."/>
            <person name="Fredrickson J.K."/>
            <person name="Kolker E."/>
            <person name="McCuel L.A."/>
            <person name="DiChristina T."/>
            <person name="Nealson K.H."/>
            <person name="Newman D."/>
            <person name="Tiedje J.M."/>
            <person name="Zhou J."/>
            <person name="Romine M.F."/>
            <person name="Culley D.E."/>
            <person name="Serres M."/>
            <person name="Chertkov O."/>
            <person name="Brettin T."/>
            <person name="Bruce D."/>
            <person name="Han C."/>
            <person name="Tapia R."/>
            <person name="Gilna P."/>
            <person name="Schmutz J."/>
            <person name="Larimer F."/>
            <person name="Land M."/>
            <person name="Hauser L."/>
            <person name="Kyrpides N."/>
            <person name="Mikhailova N."/>
            <person name="Richardson P."/>
        </authorList>
    </citation>
    <scope>NUCLEOTIDE SEQUENCE [LARGE SCALE GENOMIC DNA]</scope>
    <source>
        <strain>NCIMB 400</strain>
    </source>
</reference>
<keyword id="KW-0028">Amino-acid biosynthesis</keyword>
<keyword id="KW-0963">Cytoplasm</keyword>
<keyword id="KW-0220">Diaminopimelate biosynthesis</keyword>
<keyword id="KW-0456">Lyase</keyword>
<keyword id="KW-0457">Lysine biosynthesis</keyword>
<keyword id="KW-1185">Reference proteome</keyword>
<keyword id="KW-0704">Schiff base</keyword>
<proteinExistence type="inferred from homology"/>